<name>TIG_BACMK</name>
<reference key="1">
    <citation type="journal article" date="2008" name="Chem. Biol. Interact.">
        <title>Extending the Bacillus cereus group genomics to putative food-borne pathogens of different toxicity.</title>
        <authorList>
            <person name="Lapidus A."/>
            <person name="Goltsman E."/>
            <person name="Auger S."/>
            <person name="Galleron N."/>
            <person name="Segurens B."/>
            <person name="Dossat C."/>
            <person name="Land M.L."/>
            <person name="Broussolle V."/>
            <person name="Brillard J."/>
            <person name="Guinebretiere M.-H."/>
            <person name="Sanchis V."/>
            <person name="Nguen-the C."/>
            <person name="Lereclus D."/>
            <person name="Richardson P."/>
            <person name="Wincker P."/>
            <person name="Weissenbach J."/>
            <person name="Ehrlich S.D."/>
            <person name="Sorokin A."/>
        </authorList>
    </citation>
    <scope>NUCLEOTIDE SEQUENCE [LARGE SCALE GENOMIC DNA]</scope>
    <source>
        <strain>KBAB4</strain>
    </source>
</reference>
<dbReference type="EC" id="5.2.1.8" evidence="1"/>
<dbReference type="EMBL" id="CP000903">
    <property type="protein sequence ID" value="ABY45477.1"/>
    <property type="molecule type" value="Genomic_DNA"/>
</dbReference>
<dbReference type="RefSeq" id="WP_002015345.1">
    <property type="nucleotide sequence ID" value="NC_010184.1"/>
</dbReference>
<dbReference type="SMR" id="A9VIU7"/>
<dbReference type="KEGG" id="bwe:BcerKBAB4_4318"/>
<dbReference type="eggNOG" id="COG0544">
    <property type="taxonomic scope" value="Bacteria"/>
</dbReference>
<dbReference type="HOGENOM" id="CLU_033058_3_2_9"/>
<dbReference type="Proteomes" id="UP000002154">
    <property type="component" value="Chromosome"/>
</dbReference>
<dbReference type="GO" id="GO:0005737">
    <property type="term" value="C:cytoplasm"/>
    <property type="evidence" value="ECO:0007669"/>
    <property type="project" value="UniProtKB-SubCell"/>
</dbReference>
<dbReference type="GO" id="GO:0003755">
    <property type="term" value="F:peptidyl-prolyl cis-trans isomerase activity"/>
    <property type="evidence" value="ECO:0007669"/>
    <property type="project" value="UniProtKB-UniRule"/>
</dbReference>
<dbReference type="GO" id="GO:0044183">
    <property type="term" value="F:protein folding chaperone"/>
    <property type="evidence" value="ECO:0007669"/>
    <property type="project" value="TreeGrafter"/>
</dbReference>
<dbReference type="GO" id="GO:0043022">
    <property type="term" value="F:ribosome binding"/>
    <property type="evidence" value="ECO:0007669"/>
    <property type="project" value="TreeGrafter"/>
</dbReference>
<dbReference type="GO" id="GO:0051083">
    <property type="term" value="P:'de novo' cotranslational protein folding"/>
    <property type="evidence" value="ECO:0007669"/>
    <property type="project" value="TreeGrafter"/>
</dbReference>
<dbReference type="GO" id="GO:0051301">
    <property type="term" value="P:cell division"/>
    <property type="evidence" value="ECO:0007669"/>
    <property type="project" value="UniProtKB-KW"/>
</dbReference>
<dbReference type="GO" id="GO:0061077">
    <property type="term" value="P:chaperone-mediated protein folding"/>
    <property type="evidence" value="ECO:0007669"/>
    <property type="project" value="TreeGrafter"/>
</dbReference>
<dbReference type="GO" id="GO:0015031">
    <property type="term" value="P:protein transport"/>
    <property type="evidence" value="ECO:0007669"/>
    <property type="project" value="UniProtKB-UniRule"/>
</dbReference>
<dbReference type="GO" id="GO:0043335">
    <property type="term" value="P:protein unfolding"/>
    <property type="evidence" value="ECO:0007669"/>
    <property type="project" value="TreeGrafter"/>
</dbReference>
<dbReference type="FunFam" id="3.10.50.40:FF:000001">
    <property type="entry name" value="Trigger factor"/>
    <property type="match status" value="1"/>
</dbReference>
<dbReference type="FunFam" id="3.30.70.1050:FF:000002">
    <property type="entry name" value="Trigger factor"/>
    <property type="match status" value="1"/>
</dbReference>
<dbReference type="Gene3D" id="3.10.50.40">
    <property type="match status" value="1"/>
</dbReference>
<dbReference type="Gene3D" id="3.30.70.1050">
    <property type="entry name" value="Trigger factor ribosome-binding domain"/>
    <property type="match status" value="1"/>
</dbReference>
<dbReference type="Gene3D" id="1.10.3120.10">
    <property type="entry name" value="Trigger factor, C-terminal domain"/>
    <property type="match status" value="1"/>
</dbReference>
<dbReference type="HAMAP" id="MF_00303">
    <property type="entry name" value="Trigger_factor_Tig"/>
    <property type="match status" value="1"/>
</dbReference>
<dbReference type="InterPro" id="IPR046357">
    <property type="entry name" value="PPIase_dom_sf"/>
</dbReference>
<dbReference type="InterPro" id="IPR001179">
    <property type="entry name" value="PPIase_FKBP_dom"/>
</dbReference>
<dbReference type="InterPro" id="IPR005215">
    <property type="entry name" value="Trig_fac"/>
</dbReference>
<dbReference type="InterPro" id="IPR008880">
    <property type="entry name" value="Trigger_fac_C"/>
</dbReference>
<dbReference type="InterPro" id="IPR037041">
    <property type="entry name" value="Trigger_fac_C_sf"/>
</dbReference>
<dbReference type="InterPro" id="IPR008881">
    <property type="entry name" value="Trigger_fac_ribosome-bd_bac"/>
</dbReference>
<dbReference type="InterPro" id="IPR036611">
    <property type="entry name" value="Trigger_fac_ribosome-bd_sf"/>
</dbReference>
<dbReference type="InterPro" id="IPR027304">
    <property type="entry name" value="Trigger_fact/SurA_dom_sf"/>
</dbReference>
<dbReference type="NCBIfam" id="TIGR00115">
    <property type="entry name" value="tig"/>
    <property type="match status" value="1"/>
</dbReference>
<dbReference type="PANTHER" id="PTHR30560">
    <property type="entry name" value="TRIGGER FACTOR CHAPERONE AND PEPTIDYL-PROLYL CIS/TRANS ISOMERASE"/>
    <property type="match status" value="1"/>
</dbReference>
<dbReference type="PANTHER" id="PTHR30560:SF3">
    <property type="entry name" value="TRIGGER FACTOR-LIKE PROTEIN TIG, CHLOROPLASTIC"/>
    <property type="match status" value="1"/>
</dbReference>
<dbReference type="Pfam" id="PF00254">
    <property type="entry name" value="FKBP_C"/>
    <property type="match status" value="1"/>
</dbReference>
<dbReference type="Pfam" id="PF05698">
    <property type="entry name" value="Trigger_C"/>
    <property type="match status" value="1"/>
</dbReference>
<dbReference type="Pfam" id="PF05697">
    <property type="entry name" value="Trigger_N"/>
    <property type="match status" value="1"/>
</dbReference>
<dbReference type="PIRSF" id="PIRSF003095">
    <property type="entry name" value="Trigger_factor"/>
    <property type="match status" value="1"/>
</dbReference>
<dbReference type="SUPFAM" id="SSF54534">
    <property type="entry name" value="FKBP-like"/>
    <property type="match status" value="1"/>
</dbReference>
<dbReference type="SUPFAM" id="SSF109998">
    <property type="entry name" value="Triger factor/SurA peptide-binding domain-like"/>
    <property type="match status" value="1"/>
</dbReference>
<dbReference type="SUPFAM" id="SSF102735">
    <property type="entry name" value="Trigger factor ribosome-binding domain"/>
    <property type="match status" value="1"/>
</dbReference>
<dbReference type="PROSITE" id="PS50059">
    <property type="entry name" value="FKBP_PPIASE"/>
    <property type="match status" value="1"/>
</dbReference>
<feature type="chain" id="PRO_1000115499" description="Trigger factor">
    <location>
        <begin position="1"/>
        <end position="425"/>
    </location>
</feature>
<feature type="domain" description="PPIase FKBP-type" evidence="1">
    <location>
        <begin position="163"/>
        <end position="248"/>
    </location>
</feature>
<keyword id="KW-0131">Cell cycle</keyword>
<keyword id="KW-0132">Cell division</keyword>
<keyword id="KW-0143">Chaperone</keyword>
<keyword id="KW-0963">Cytoplasm</keyword>
<keyword id="KW-0413">Isomerase</keyword>
<keyword id="KW-0697">Rotamase</keyword>
<proteinExistence type="inferred from homology"/>
<sequence length="425" mass="47207">MSTKWEKLEGNVGVLTIEVDAKEVNNSIDAAFKKVVKTINVPGFRKGKMPRPLFEQRFGIESLYQDALDIILPKAYGEAIDEAGIFPVAHPEIDIEKFEKGQNLIFTAKVTVKPEVKLGDYKGLAVEKVETTVTDEDVENEVKALQERQAELVVKEDGTAADGDTAVIDFEGFVDGEAFEGGKGENYSLAIGSGTFIPGFEEQVIGLKSGDSKEVEVSFPEEYHAAELAGKPATFKVTIHEIKTKELPELNDEFAKDADEEVATLDELKTKLRTNLEEGKKHEAEHKVRDEVVELAAANAEIDIPEAMIDTELDRMVREFEQRLSQQGMNLELYYQFTGTDADKLKEQMKEDAQKRVRINLVLEAIIEAENIEVTEEEVTAEVEKMAEMYGMPVDAIKQALGSVDALSEDLKVRKAVDFLVDNAA</sequence>
<evidence type="ECO:0000255" key="1">
    <source>
        <dbReference type="HAMAP-Rule" id="MF_00303"/>
    </source>
</evidence>
<organism>
    <name type="scientific">Bacillus mycoides (strain KBAB4)</name>
    <name type="common">Bacillus weihenstephanensis</name>
    <dbReference type="NCBI Taxonomy" id="315730"/>
    <lineage>
        <taxon>Bacteria</taxon>
        <taxon>Bacillati</taxon>
        <taxon>Bacillota</taxon>
        <taxon>Bacilli</taxon>
        <taxon>Bacillales</taxon>
        <taxon>Bacillaceae</taxon>
        <taxon>Bacillus</taxon>
        <taxon>Bacillus cereus group</taxon>
    </lineage>
</organism>
<accession>A9VIU7</accession>
<gene>
    <name evidence="1" type="primary">tig</name>
    <name type="ordered locus">BcerKBAB4_4318</name>
</gene>
<protein>
    <recommendedName>
        <fullName evidence="1">Trigger factor</fullName>
        <shortName evidence="1">TF</shortName>
        <ecNumber evidence="1">5.2.1.8</ecNumber>
    </recommendedName>
    <alternativeName>
        <fullName evidence="1">PPIase</fullName>
    </alternativeName>
</protein>
<comment type="function">
    <text evidence="1">Involved in protein export. Acts as a chaperone by maintaining the newly synthesized protein in an open conformation. Functions as a peptidyl-prolyl cis-trans isomerase.</text>
</comment>
<comment type="catalytic activity">
    <reaction evidence="1">
        <text>[protein]-peptidylproline (omega=180) = [protein]-peptidylproline (omega=0)</text>
        <dbReference type="Rhea" id="RHEA:16237"/>
        <dbReference type="Rhea" id="RHEA-COMP:10747"/>
        <dbReference type="Rhea" id="RHEA-COMP:10748"/>
        <dbReference type="ChEBI" id="CHEBI:83833"/>
        <dbReference type="ChEBI" id="CHEBI:83834"/>
        <dbReference type="EC" id="5.2.1.8"/>
    </reaction>
</comment>
<comment type="subcellular location">
    <subcellularLocation>
        <location>Cytoplasm</location>
    </subcellularLocation>
    <text evidence="1">About half TF is bound to the ribosome near the polypeptide exit tunnel while the other half is free in the cytoplasm.</text>
</comment>
<comment type="domain">
    <text evidence="1">Consists of 3 domains; the N-terminus binds the ribosome, the middle domain has PPIase activity, while the C-terminus has intrinsic chaperone activity on its own.</text>
</comment>
<comment type="similarity">
    <text evidence="1">Belongs to the FKBP-type PPIase family. Tig subfamily.</text>
</comment>